<name>RF1_WOLPM</name>
<sequence>MDMENNLQDLKKKFNDIERNLENPTNLSQKEFITLSKEYSELRPIIKIIDEYNTLKEEISDLEEIMKDENSEGDIKELAKEEFFEKHKVLLPKIKAKLKLALLPKDEDDSRNAILEIRAGTGGEEAALFAAMLFRMYQKYAERRNWKFEPISISNTGIGGYKEASALINGTEVFARLKFESGVHRVQRVPETESSGRLHTSAATVAILPEVEEVDFKIEEKDLRIDVYRSSGPGGQSVNTTDSAVRVTHLPTGIVVIQQDEKSQHKNKAKALKVLRARLYEIERQKKEMERSTMRKSQIGSGDRSERIRTYNFPQSRITDHRINLTSHRLEQIIKEGELDEFIEALISRNEAERLAGES</sequence>
<accession>Q73IC2</accession>
<keyword id="KW-0963">Cytoplasm</keyword>
<keyword id="KW-0488">Methylation</keyword>
<keyword id="KW-0648">Protein biosynthesis</keyword>
<gene>
    <name evidence="1" type="primary">prfA</name>
    <name type="ordered locus">WD_0247</name>
</gene>
<comment type="function">
    <text evidence="1">Peptide chain release factor 1 directs the termination of translation in response to the peptide chain termination codons UAG and UAA.</text>
</comment>
<comment type="subcellular location">
    <subcellularLocation>
        <location evidence="1">Cytoplasm</location>
    </subcellularLocation>
</comment>
<comment type="PTM">
    <text evidence="1">Methylated by PrmC. Methylation increases the termination efficiency of RF1.</text>
</comment>
<comment type="similarity">
    <text evidence="1">Belongs to the prokaryotic/mitochondrial release factor family.</text>
</comment>
<evidence type="ECO:0000255" key="1">
    <source>
        <dbReference type="HAMAP-Rule" id="MF_00093"/>
    </source>
</evidence>
<evidence type="ECO:0000256" key="2">
    <source>
        <dbReference type="SAM" id="MobiDB-lite"/>
    </source>
</evidence>
<feature type="chain" id="PRO_0000263389" description="Peptide chain release factor 1">
    <location>
        <begin position="1"/>
        <end position="359"/>
    </location>
</feature>
<feature type="region of interest" description="Disordered" evidence="2">
    <location>
        <begin position="286"/>
        <end position="305"/>
    </location>
</feature>
<feature type="modified residue" description="N5-methylglutamine" evidence="1">
    <location>
        <position position="236"/>
    </location>
</feature>
<reference key="1">
    <citation type="journal article" date="2004" name="PLoS Biol.">
        <title>Phylogenomics of the reproductive parasite Wolbachia pipientis wMel: a streamlined genome overrun by mobile genetic elements.</title>
        <authorList>
            <person name="Wu M."/>
            <person name="Sun L.V."/>
            <person name="Vamathevan J.J."/>
            <person name="Riegler M."/>
            <person name="DeBoy R.T."/>
            <person name="Brownlie J.C."/>
            <person name="McGraw E.A."/>
            <person name="Martin W."/>
            <person name="Esser C."/>
            <person name="Ahmadinejad N."/>
            <person name="Wiegand C."/>
            <person name="Madupu R."/>
            <person name="Beanan M.J."/>
            <person name="Brinkac L.M."/>
            <person name="Daugherty S.C."/>
            <person name="Durkin A.S."/>
            <person name="Kolonay J.F."/>
            <person name="Nelson W.C."/>
            <person name="Mohamoud Y."/>
            <person name="Lee P."/>
            <person name="Berry K.J."/>
            <person name="Young M.B."/>
            <person name="Utterback T.R."/>
            <person name="Weidman J.F."/>
            <person name="Nierman W.C."/>
            <person name="Paulsen I.T."/>
            <person name="Nelson K.E."/>
            <person name="Tettelin H."/>
            <person name="O'Neill S.L."/>
            <person name="Eisen J.A."/>
        </authorList>
    </citation>
    <scope>NUCLEOTIDE SEQUENCE [LARGE SCALE GENOMIC DNA]</scope>
</reference>
<dbReference type="EMBL" id="AE017196">
    <property type="protein sequence ID" value="AAS13990.1"/>
    <property type="molecule type" value="Genomic_DNA"/>
</dbReference>
<dbReference type="RefSeq" id="WP_007548640.1">
    <property type="nucleotide sequence ID" value="NZ_OX384529.1"/>
</dbReference>
<dbReference type="SMR" id="Q73IC2"/>
<dbReference type="EnsemblBacteria" id="AAS13990">
    <property type="protein sequence ID" value="AAS13990"/>
    <property type="gene ID" value="WD_0247"/>
</dbReference>
<dbReference type="GeneID" id="70035740"/>
<dbReference type="KEGG" id="wol:WD_0247"/>
<dbReference type="eggNOG" id="COG0216">
    <property type="taxonomic scope" value="Bacteria"/>
</dbReference>
<dbReference type="Proteomes" id="UP000008215">
    <property type="component" value="Chromosome"/>
</dbReference>
<dbReference type="GO" id="GO:0005737">
    <property type="term" value="C:cytoplasm"/>
    <property type="evidence" value="ECO:0007669"/>
    <property type="project" value="UniProtKB-SubCell"/>
</dbReference>
<dbReference type="GO" id="GO:0016149">
    <property type="term" value="F:translation release factor activity, codon specific"/>
    <property type="evidence" value="ECO:0007669"/>
    <property type="project" value="UniProtKB-UniRule"/>
</dbReference>
<dbReference type="FunFam" id="3.30.160.20:FF:000004">
    <property type="entry name" value="Peptide chain release factor 1"/>
    <property type="match status" value="1"/>
</dbReference>
<dbReference type="FunFam" id="3.30.70.1660:FF:000002">
    <property type="entry name" value="Peptide chain release factor 1"/>
    <property type="match status" value="1"/>
</dbReference>
<dbReference type="FunFam" id="3.30.70.1660:FF:000004">
    <property type="entry name" value="Peptide chain release factor 1"/>
    <property type="match status" value="1"/>
</dbReference>
<dbReference type="Gene3D" id="3.30.160.20">
    <property type="match status" value="1"/>
</dbReference>
<dbReference type="Gene3D" id="3.30.70.1660">
    <property type="match status" value="2"/>
</dbReference>
<dbReference type="Gene3D" id="6.10.140.1950">
    <property type="match status" value="1"/>
</dbReference>
<dbReference type="HAMAP" id="MF_00093">
    <property type="entry name" value="Rel_fac_1"/>
    <property type="match status" value="1"/>
</dbReference>
<dbReference type="InterPro" id="IPR005139">
    <property type="entry name" value="PCRF"/>
</dbReference>
<dbReference type="InterPro" id="IPR000352">
    <property type="entry name" value="Pep_chain_release_fac_I"/>
</dbReference>
<dbReference type="InterPro" id="IPR045853">
    <property type="entry name" value="Pep_chain_release_fac_I_sf"/>
</dbReference>
<dbReference type="InterPro" id="IPR050057">
    <property type="entry name" value="Prokaryotic/Mito_RF"/>
</dbReference>
<dbReference type="InterPro" id="IPR004373">
    <property type="entry name" value="RF-1"/>
</dbReference>
<dbReference type="NCBIfam" id="TIGR00019">
    <property type="entry name" value="prfA"/>
    <property type="match status" value="1"/>
</dbReference>
<dbReference type="NCBIfam" id="NF001859">
    <property type="entry name" value="PRK00591.1"/>
    <property type="match status" value="1"/>
</dbReference>
<dbReference type="PANTHER" id="PTHR43804">
    <property type="entry name" value="LD18447P"/>
    <property type="match status" value="1"/>
</dbReference>
<dbReference type="PANTHER" id="PTHR43804:SF7">
    <property type="entry name" value="LD18447P"/>
    <property type="match status" value="1"/>
</dbReference>
<dbReference type="Pfam" id="PF03462">
    <property type="entry name" value="PCRF"/>
    <property type="match status" value="1"/>
</dbReference>
<dbReference type="Pfam" id="PF00472">
    <property type="entry name" value="RF-1"/>
    <property type="match status" value="1"/>
</dbReference>
<dbReference type="SMART" id="SM00937">
    <property type="entry name" value="PCRF"/>
    <property type="match status" value="1"/>
</dbReference>
<dbReference type="SUPFAM" id="SSF75620">
    <property type="entry name" value="Release factor"/>
    <property type="match status" value="1"/>
</dbReference>
<dbReference type="PROSITE" id="PS00745">
    <property type="entry name" value="RF_PROK_I"/>
    <property type="match status" value="1"/>
</dbReference>
<organism>
    <name type="scientific">Wolbachia pipientis wMel</name>
    <dbReference type="NCBI Taxonomy" id="163164"/>
    <lineage>
        <taxon>Bacteria</taxon>
        <taxon>Pseudomonadati</taxon>
        <taxon>Pseudomonadota</taxon>
        <taxon>Alphaproteobacteria</taxon>
        <taxon>Rickettsiales</taxon>
        <taxon>Anaplasmataceae</taxon>
        <taxon>Wolbachieae</taxon>
        <taxon>Wolbachia</taxon>
    </lineage>
</organism>
<protein>
    <recommendedName>
        <fullName evidence="1">Peptide chain release factor 1</fullName>
        <shortName evidence="1">RF-1</shortName>
    </recommendedName>
</protein>
<proteinExistence type="inferred from homology"/>